<keyword id="KW-0066">ATP synthesis</keyword>
<keyword id="KW-0067">ATP-binding</keyword>
<keyword id="KW-0139">CF(1)</keyword>
<keyword id="KW-0150">Chloroplast</keyword>
<keyword id="KW-0375">Hydrogen ion transport</keyword>
<keyword id="KW-0406">Ion transport</keyword>
<keyword id="KW-0472">Membrane</keyword>
<keyword id="KW-0547">Nucleotide-binding</keyword>
<keyword id="KW-0934">Plastid</keyword>
<keyword id="KW-0793">Thylakoid</keyword>
<keyword id="KW-1278">Translocase</keyword>
<keyword id="KW-0813">Transport</keyword>
<dbReference type="EC" id="7.1.2.2"/>
<dbReference type="EMBL" id="U93830">
    <property type="protein sequence ID" value="AAB51738.1"/>
    <property type="molecule type" value="Genomic_DNA"/>
</dbReference>
<dbReference type="GO" id="GO:0009535">
    <property type="term" value="C:chloroplast thylakoid membrane"/>
    <property type="evidence" value="ECO:0007669"/>
    <property type="project" value="UniProtKB-SubCell"/>
</dbReference>
<dbReference type="GO" id="GO:0005739">
    <property type="term" value="C:mitochondrion"/>
    <property type="evidence" value="ECO:0007669"/>
    <property type="project" value="GOC"/>
</dbReference>
<dbReference type="GO" id="GO:0045259">
    <property type="term" value="C:proton-transporting ATP synthase complex"/>
    <property type="evidence" value="ECO:0007669"/>
    <property type="project" value="UniProtKB-KW"/>
</dbReference>
<dbReference type="GO" id="GO:0005524">
    <property type="term" value="F:ATP binding"/>
    <property type="evidence" value="ECO:0007669"/>
    <property type="project" value="UniProtKB-KW"/>
</dbReference>
<dbReference type="GO" id="GO:0046933">
    <property type="term" value="F:proton-transporting ATP synthase activity, rotational mechanism"/>
    <property type="evidence" value="ECO:0007669"/>
    <property type="project" value="TreeGrafter"/>
</dbReference>
<dbReference type="GO" id="GO:0042776">
    <property type="term" value="P:proton motive force-driven mitochondrial ATP synthesis"/>
    <property type="evidence" value="ECO:0007669"/>
    <property type="project" value="TreeGrafter"/>
</dbReference>
<dbReference type="CDD" id="cd18110">
    <property type="entry name" value="ATP-synt_F1_beta_C"/>
    <property type="match status" value="1"/>
</dbReference>
<dbReference type="FunFam" id="1.10.1140.10:FF:000005">
    <property type="entry name" value="ATP synthase subunit beta"/>
    <property type="match status" value="1"/>
</dbReference>
<dbReference type="Gene3D" id="1.10.1140.10">
    <property type="entry name" value="Bovine Mitochondrial F1-atpase, Atp Synthase Beta Chain, Chain D, domain 3"/>
    <property type="match status" value="1"/>
</dbReference>
<dbReference type="Gene3D" id="3.40.50.300">
    <property type="entry name" value="P-loop containing nucleotide triphosphate hydrolases"/>
    <property type="match status" value="1"/>
</dbReference>
<dbReference type="InterPro" id="IPR055190">
    <property type="entry name" value="ATP-synt_VA_C"/>
</dbReference>
<dbReference type="InterPro" id="IPR020003">
    <property type="entry name" value="ATPase_a/bsu_AS"/>
</dbReference>
<dbReference type="InterPro" id="IPR050053">
    <property type="entry name" value="ATPase_alpha/beta_chains"/>
</dbReference>
<dbReference type="InterPro" id="IPR000194">
    <property type="entry name" value="ATPase_F1/V1/A1_a/bsu_nucl-bd"/>
</dbReference>
<dbReference type="InterPro" id="IPR024034">
    <property type="entry name" value="ATPase_F1/V1_b/a_C"/>
</dbReference>
<dbReference type="InterPro" id="IPR027417">
    <property type="entry name" value="P-loop_NTPase"/>
</dbReference>
<dbReference type="PANTHER" id="PTHR15184">
    <property type="entry name" value="ATP SYNTHASE"/>
    <property type="match status" value="1"/>
</dbReference>
<dbReference type="PANTHER" id="PTHR15184:SF71">
    <property type="entry name" value="ATP SYNTHASE SUBUNIT BETA, MITOCHONDRIAL"/>
    <property type="match status" value="1"/>
</dbReference>
<dbReference type="Pfam" id="PF00006">
    <property type="entry name" value="ATP-synt_ab"/>
    <property type="match status" value="1"/>
</dbReference>
<dbReference type="Pfam" id="PF22919">
    <property type="entry name" value="ATP-synt_VA_C"/>
    <property type="match status" value="1"/>
</dbReference>
<dbReference type="SUPFAM" id="SSF47917">
    <property type="entry name" value="C-terminal domain of alpha and beta subunits of F1 ATP synthase"/>
    <property type="match status" value="1"/>
</dbReference>
<dbReference type="SUPFAM" id="SSF52540">
    <property type="entry name" value="P-loop containing nucleoside triphosphate hydrolases"/>
    <property type="match status" value="1"/>
</dbReference>
<dbReference type="PROSITE" id="PS00152">
    <property type="entry name" value="ATPASE_ALPHA_BETA"/>
    <property type="match status" value="1"/>
</dbReference>
<feature type="chain" id="PRO_0000144520" description="ATP synthase subunit beta, chloroplastic">
    <location>
        <begin position="1" status="less than"/>
        <end position="208" status="greater than"/>
    </location>
</feature>
<feature type="non-terminal residue">
    <location>
        <position position="1"/>
    </location>
</feature>
<feature type="non-terminal residue">
    <location>
        <position position="208"/>
    </location>
</feature>
<name>ATPB_LONHI</name>
<sequence length="208" mass="22687">RDVNKPSVLLFIDNIFRFVQAGSEVSALLGRMPSAVGYQPTLGTEMGSLQERITSTKEGSITSIQAVYVPADDPTDPAPATTFAHLDATTVLPRGLAAKGIYPAVDPLDSTSTMLQPWIVGEEHHETAQGVKQTLQRYKELQDIIAILGLDESSEEDRLTVARARKIERFLSQPFFVAEVFTGSPGKYVSLPETIKGFQMILPGXLDN</sequence>
<accession>O03073</accession>
<reference key="1">
    <citation type="journal article" date="1997" name="Am. J. Bot.">
        <title>Evaluation of atpB nucleotide sequences for phylogenetic studies of ferns and other pteridophytes.</title>
        <authorList>
            <person name="Wolf P.G."/>
        </authorList>
    </citation>
    <scope>NUCLEOTIDE SEQUENCE [GENOMIC DNA]</scope>
</reference>
<gene>
    <name type="primary">atpB</name>
</gene>
<geneLocation type="chloroplast"/>
<organism>
    <name type="scientific">Lonchitis hirsuta</name>
    <name type="common">Tomato fern</name>
    <dbReference type="NCBI Taxonomy" id="32095"/>
    <lineage>
        <taxon>Eukaryota</taxon>
        <taxon>Viridiplantae</taxon>
        <taxon>Streptophyta</taxon>
        <taxon>Embryophyta</taxon>
        <taxon>Tracheophyta</taxon>
        <taxon>Polypodiopsida</taxon>
        <taxon>Polypodiidae</taxon>
        <taxon>Polypodiales</taxon>
        <taxon>Lindsaeineae</taxon>
        <taxon>Lonchitidaceae</taxon>
        <taxon>Lonchitis</taxon>
    </lineage>
</organism>
<proteinExistence type="inferred from homology"/>
<comment type="function">
    <text evidence="1">Produces ATP from ADP in the presence of a proton gradient across the membrane. The catalytic sites are hosted primarily by the beta subunits (By similarity).</text>
</comment>
<comment type="catalytic activity">
    <reaction evidence="2">
        <text>ATP + H2O + 4 H(+)(in) = ADP + phosphate + 5 H(+)(out)</text>
        <dbReference type="Rhea" id="RHEA:57720"/>
        <dbReference type="ChEBI" id="CHEBI:15377"/>
        <dbReference type="ChEBI" id="CHEBI:15378"/>
        <dbReference type="ChEBI" id="CHEBI:30616"/>
        <dbReference type="ChEBI" id="CHEBI:43474"/>
        <dbReference type="ChEBI" id="CHEBI:456216"/>
        <dbReference type="EC" id="7.1.2.2"/>
    </reaction>
</comment>
<comment type="subunit">
    <text evidence="1">F-type ATPases have 2 components, CF(1) - the catalytic core - and CF(0) - the membrane proton channel. CF(1) has five subunits: alpha(3), beta(3), gamma(1), delta(1), epsilon(1). CF(0) has four main subunits: a(1), b(1), b'(1) and c(9-12) (By similarity).</text>
</comment>
<comment type="subcellular location">
    <subcellularLocation>
        <location evidence="1">Plastid</location>
        <location evidence="1">Chloroplast thylakoid membrane</location>
        <topology evidence="1">Peripheral membrane protein</topology>
    </subcellularLocation>
</comment>
<comment type="similarity">
    <text evidence="3">Belongs to the ATPase alpha/beta chains family.</text>
</comment>
<protein>
    <recommendedName>
        <fullName>ATP synthase subunit beta, chloroplastic</fullName>
        <ecNumber>7.1.2.2</ecNumber>
    </recommendedName>
    <alternativeName>
        <fullName>ATP synthase F1 sector subunit beta</fullName>
    </alternativeName>
    <alternativeName>
        <fullName>F-ATPase subunit beta</fullName>
    </alternativeName>
</protein>
<evidence type="ECO:0000250" key="1"/>
<evidence type="ECO:0000255" key="2">
    <source>
        <dbReference type="PROSITE-ProRule" id="PRU10106"/>
    </source>
</evidence>
<evidence type="ECO:0000305" key="3"/>